<keyword id="KW-1185">Reference proteome</keyword>
<keyword id="KW-1277">Toxin-antitoxin system</keyword>
<accession>P0DXE9</accession>
<name>PHOAT_MYCTU</name>
<organism>
    <name type="scientific">Mycobacterium tuberculosis (strain ATCC 25618 / H37Rv)</name>
    <dbReference type="NCBI Taxonomy" id="83332"/>
    <lineage>
        <taxon>Bacteria</taxon>
        <taxon>Bacillati</taxon>
        <taxon>Actinomycetota</taxon>
        <taxon>Actinomycetes</taxon>
        <taxon>Mycobacteriales</taxon>
        <taxon>Mycobacteriaceae</taxon>
        <taxon>Mycobacterium</taxon>
        <taxon>Mycobacterium tuberculosis complex</taxon>
    </lineage>
</organism>
<protein>
    <recommendedName>
        <fullName evidence="2">Probable antitoxin PhoAT</fullName>
    </recommendedName>
</protein>
<gene>
    <name evidence="2" type="primary">phoAT</name>
    <name evidence="3" type="ordered locus">Rv1094.5</name>
</gene>
<dbReference type="EMBL" id="AL123456">
    <property type="status" value="NOT_ANNOTATED_CDS"/>
    <property type="molecule type" value="Genomic_DNA"/>
</dbReference>
<dbReference type="TubercuList" id="Rv1094.5"/>
<dbReference type="Proteomes" id="UP000001584">
    <property type="component" value="Chromosome"/>
</dbReference>
<evidence type="ECO:0000269" key="1">
    <source>
    </source>
</evidence>
<evidence type="ECO:0000303" key="2">
    <source>
    </source>
</evidence>
<evidence type="ECO:0000305" key="3"/>
<evidence type="ECO:0000312" key="4">
    <source>
        <dbReference type="EMBL" id="AL123456"/>
    </source>
</evidence>
<comment type="function">
    <text evidence="1">Antitoxin component of a type II toxin-antitoxin (TA) system. The cognate antitoxin is PhoAT; the toxin gene cannot be expressed in the absence of the antitoxin gene in M.smegmatis (strain mc(2)4517), and abrogates the toxic effects of PhoH2 in M.smegmatis strain mc(2)155 (PubMed:25999286).</text>
</comment>
<comment type="subunit">
    <text evidence="1">Interacts with toxin PhoH2 (PubMed:25999286).</text>
</comment>
<comment type="induction">
    <text evidence="1">Part of the phoAT-phoH2 operon (PubMed:25999286).</text>
</comment>
<comment type="similarity">
    <text evidence="3">Belongs to the PhoAT antitoxin family.</text>
</comment>
<sequence>MASDMLCCQGGTFRHDGCHDKGRTGPGPGVAAPADMLGWVRSSAVSSRSAP</sequence>
<proteinExistence type="evidence at protein level"/>
<feature type="chain" id="PRO_0000460849" description="Probable antitoxin PhoAT">
    <location>
        <begin position="1"/>
        <end position="51"/>
    </location>
</feature>
<reference evidence="4" key="1">
    <citation type="journal article" date="1998" name="Nature">
        <title>Deciphering the biology of Mycobacterium tuberculosis from the complete genome sequence.</title>
        <authorList>
            <person name="Cole S.T."/>
            <person name="Brosch R."/>
            <person name="Parkhill J."/>
            <person name="Garnier T."/>
            <person name="Churcher C.M."/>
            <person name="Harris D.E."/>
            <person name="Gordon S.V."/>
            <person name="Eiglmeier K."/>
            <person name="Gas S."/>
            <person name="Barry C.E. III"/>
            <person name="Tekaia F."/>
            <person name="Badcock K."/>
            <person name="Basham D."/>
            <person name="Brown D."/>
            <person name="Chillingworth T."/>
            <person name="Connor R."/>
            <person name="Davies R.M."/>
            <person name="Devlin K."/>
            <person name="Feltwell T."/>
            <person name="Gentles S."/>
            <person name="Hamlin N."/>
            <person name="Holroyd S."/>
            <person name="Hornsby T."/>
            <person name="Jagels K."/>
            <person name="Krogh A."/>
            <person name="McLean J."/>
            <person name="Moule S."/>
            <person name="Murphy L.D."/>
            <person name="Oliver S."/>
            <person name="Osborne J."/>
            <person name="Quail M.A."/>
            <person name="Rajandream M.A."/>
            <person name="Rogers J."/>
            <person name="Rutter S."/>
            <person name="Seeger K."/>
            <person name="Skelton S."/>
            <person name="Squares S."/>
            <person name="Squares R."/>
            <person name="Sulston J.E."/>
            <person name="Taylor K."/>
            <person name="Whitehead S."/>
            <person name="Barrell B.G."/>
        </authorList>
    </citation>
    <scope>NUCLEOTIDE SEQUENCE [LARGE SCALE GENOMIC DNA]</scope>
    <source>
        <strain>ATCC 25618 / H37Rv</strain>
    </source>
</reference>
<reference key="2">
    <citation type="journal article" date="2015" name="Tuberculosis">
        <title>The mycobacterial PhoH2 proteins are type II toxin antitoxins coupled to RNA helicase domains.</title>
        <authorList>
            <person name="Andrews E.S."/>
            <person name="Arcus V.L."/>
        </authorList>
    </citation>
    <scope>IDENTIFICATION BY MASS SPECTROMETRY</scope>
    <scope>FUNCTION</scope>
    <scope>SUBUNIT</scope>
    <scope>OPERON STRUCTURE</scope>
    <source>
        <strain>ATCC 25618 / H37Rv</strain>
    </source>
</reference>